<dbReference type="EC" id="4.1.2.40" evidence="1"/>
<dbReference type="EMBL" id="CP000029">
    <property type="protein sequence ID" value="AAW55177.1"/>
    <property type="molecule type" value="Genomic_DNA"/>
</dbReference>
<dbReference type="RefSeq" id="WP_002456993.1">
    <property type="nucleotide sequence ID" value="NC_002976.3"/>
</dbReference>
<dbReference type="SMR" id="Q5HM38"/>
<dbReference type="STRING" id="176279.SERP1792"/>
<dbReference type="KEGG" id="ser:SERP1792"/>
<dbReference type="eggNOG" id="COG3684">
    <property type="taxonomic scope" value="Bacteria"/>
</dbReference>
<dbReference type="HOGENOM" id="CLU_058971_0_1_9"/>
<dbReference type="UniPathway" id="UPA00704">
    <property type="reaction ID" value="UER00716"/>
</dbReference>
<dbReference type="Proteomes" id="UP000000531">
    <property type="component" value="Chromosome"/>
</dbReference>
<dbReference type="GO" id="GO:0061595">
    <property type="term" value="F:6-deoxy-6-sulfofructose-1-phosphate aldolase activity"/>
    <property type="evidence" value="ECO:0007669"/>
    <property type="project" value="TreeGrafter"/>
</dbReference>
<dbReference type="GO" id="GO:0009024">
    <property type="term" value="F:tagatose-6-phosphate kinase activity"/>
    <property type="evidence" value="ECO:0007669"/>
    <property type="project" value="InterPro"/>
</dbReference>
<dbReference type="GO" id="GO:0009025">
    <property type="term" value="F:tagatose-bisphosphate aldolase activity"/>
    <property type="evidence" value="ECO:0007669"/>
    <property type="project" value="UniProtKB-UniRule"/>
</dbReference>
<dbReference type="GO" id="GO:1902777">
    <property type="term" value="P:6-sulfoquinovose(1-) catabolic process"/>
    <property type="evidence" value="ECO:0007669"/>
    <property type="project" value="TreeGrafter"/>
</dbReference>
<dbReference type="GO" id="GO:2001059">
    <property type="term" value="P:D-tagatose 6-phosphate catabolic process"/>
    <property type="evidence" value="ECO:0007669"/>
    <property type="project" value="UniProtKB-UniRule"/>
</dbReference>
<dbReference type="GO" id="GO:0019512">
    <property type="term" value="P:lactose catabolic process via tagatose-6-phosphate"/>
    <property type="evidence" value="ECO:0007669"/>
    <property type="project" value="InterPro"/>
</dbReference>
<dbReference type="FunFam" id="3.20.20.70:FF:000137">
    <property type="entry name" value="Tagatose 1,6-diphosphate aldolase 2"/>
    <property type="match status" value="1"/>
</dbReference>
<dbReference type="Gene3D" id="3.20.20.70">
    <property type="entry name" value="Aldolase class I"/>
    <property type="match status" value="1"/>
</dbReference>
<dbReference type="HAMAP" id="MF_00734">
    <property type="entry name" value="LacD"/>
    <property type="match status" value="1"/>
</dbReference>
<dbReference type="InterPro" id="IPR013785">
    <property type="entry name" value="Aldolase_TIM"/>
</dbReference>
<dbReference type="InterPro" id="IPR002915">
    <property type="entry name" value="DeoC/FbaB/LacD_aldolase"/>
</dbReference>
<dbReference type="InterPro" id="IPR050552">
    <property type="entry name" value="LacD_aldolase"/>
</dbReference>
<dbReference type="InterPro" id="IPR005927">
    <property type="entry name" value="Tag_1.6-dipho_adolase"/>
</dbReference>
<dbReference type="NCBIfam" id="TIGR01232">
    <property type="entry name" value="lacD"/>
    <property type="match status" value="1"/>
</dbReference>
<dbReference type="NCBIfam" id="NF003180">
    <property type="entry name" value="PRK04161.1"/>
    <property type="match status" value="1"/>
</dbReference>
<dbReference type="NCBIfam" id="NF009065">
    <property type="entry name" value="PRK12399.1"/>
    <property type="match status" value="1"/>
</dbReference>
<dbReference type="NCBIfam" id="NF009498">
    <property type="entry name" value="PRK12858.1"/>
    <property type="match status" value="1"/>
</dbReference>
<dbReference type="PANTHER" id="PTHR39340">
    <property type="entry name" value="SULFOFRUCTOSEPHOSPHATE ALDOLASE"/>
    <property type="match status" value="1"/>
</dbReference>
<dbReference type="PANTHER" id="PTHR39340:SF1">
    <property type="entry name" value="SULFOFRUCTOSEPHOSPHATE ALDOLASE"/>
    <property type="match status" value="1"/>
</dbReference>
<dbReference type="Pfam" id="PF01791">
    <property type="entry name" value="DeoC"/>
    <property type="match status" value="1"/>
</dbReference>
<dbReference type="SMART" id="SM01133">
    <property type="entry name" value="DeoC"/>
    <property type="match status" value="1"/>
</dbReference>
<dbReference type="SUPFAM" id="SSF51569">
    <property type="entry name" value="Aldolase"/>
    <property type="match status" value="1"/>
</dbReference>
<organism>
    <name type="scientific">Staphylococcus epidermidis (strain ATCC 35984 / DSM 28319 / BCRC 17069 / CCUG 31568 / BM 3577 / RP62A)</name>
    <dbReference type="NCBI Taxonomy" id="176279"/>
    <lineage>
        <taxon>Bacteria</taxon>
        <taxon>Bacillati</taxon>
        <taxon>Bacillota</taxon>
        <taxon>Bacilli</taxon>
        <taxon>Bacillales</taxon>
        <taxon>Staphylococcaceae</taxon>
        <taxon>Staphylococcus</taxon>
    </lineage>
</organism>
<accession>Q5HM38</accession>
<proteinExistence type="inferred from homology"/>
<evidence type="ECO:0000255" key="1">
    <source>
        <dbReference type="HAMAP-Rule" id="MF_00734"/>
    </source>
</evidence>
<comment type="catalytic activity">
    <reaction evidence="1">
        <text>D-tagatofuranose 1,6-bisphosphate = D-glyceraldehyde 3-phosphate + dihydroxyacetone phosphate</text>
        <dbReference type="Rhea" id="RHEA:22948"/>
        <dbReference type="ChEBI" id="CHEBI:57642"/>
        <dbReference type="ChEBI" id="CHEBI:58694"/>
        <dbReference type="ChEBI" id="CHEBI:59776"/>
        <dbReference type="EC" id="4.1.2.40"/>
    </reaction>
</comment>
<comment type="pathway">
    <text evidence="1">Carbohydrate metabolism; D-tagatose 6-phosphate degradation; D-glyceraldehyde 3-phosphate and glycerone phosphate from D-tagatose 6-phosphate: step 2/2.</text>
</comment>
<comment type="similarity">
    <text evidence="1">Belongs to the aldolase LacD family.</text>
</comment>
<feature type="chain" id="PRO_0000203952" description="Tagatose 1,6-diphosphate aldolase">
    <location>
        <begin position="1"/>
        <end position="325"/>
    </location>
</feature>
<gene>
    <name evidence="1" type="primary">lacD</name>
    <name type="ordered locus">SERP1792</name>
</gene>
<reference key="1">
    <citation type="journal article" date="2005" name="J. Bacteriol.">
        <title>Insights on evolution of virulence and resistance from the complete genome analysis of an early methicillin-resistant Staphylococcus aureus strain and a biofilm-producing methicillin-resistant Staphylococcus epidermidis strain.</title>
        <authorList>
            <person name="Gill S.R."/>
            <person name="Fouts D.E."/>
            <person name="Archer G.L."/>
            <person name="Mongodin E.F."/>
            <person name="DeBoy R.T."/>
            <person name="Ravel J."/>
            <person name="Paulsen I.T."/>
            <person name="Kolonay J.F."/>
            <person name="Brinkac L.M."/>
            <person name="Beanan M.J."/>
            <person name="Dodson R.J."/>
            <person name="Daugherty S.C."/>
            <person name="Madupu R."/>
            <person name="Angiuoli S.V."/>
            <person name="Durkin A.S."/>
            <person name="Haft D.H."/>
            <person name="Vamathevan J.J."/>
            <person name="Khouri H."/>
            <person name="Utterback T.R."/>
            <person name="Lee C."/>
            <person name="Dimitrov G."/>
            <person name="Jiang L."/>
            <person name="Qin H."/>
            <person name="Weidman J."/>
            <person name="Tran K."/>
            <person name="Kang K.H."/>
            <person name="Hance I.R."/>
            <person name="Nelson K.E."/>
            <person name="Fraser C.M."/>
        </authorList>
    </citation>
    <scope>NUCLEOTIDE SEQUENCE [LARGE SCALE GENOMIC DNA]</scope>
    <source>
        <strain>ATCC 35984 / DSM 28319 / BCRC 17069 / CCUG 31568 / BM 3577 / RP62A</strain>
    </source>
</reference>
<name>LACD_STAEQ</name>
<keyword id="KW-0423">Lactose metabolism</keyword>
<keyword id="KW-0456">Lyase</keyword>
<keyword id="KW-1185">Reference proteome</keyword>
<sequence length="325" mass="36552">MTKSQQKVSSIEKLSNQEGIISALAFDQRGALKRMMAEHQSETPTVEQIEQLKVLVSEELTQYASSILLDPEYGLPASDARNNDCGLLLAYEKTGYDVNAKGRLPDCLVEWSAKRLKEQGANAVKFLLYYDVDDTEEINIQKKAYIERIGSECVAEDIPFFLEVLTYDDNIPDNKSAEFAKVKPRKVNEAMKLFSEDRFNVDVLKVEVPVNMNFVEGFSEGEVVYTKEEAAQHFRDQDAATHLPYIYLSAGVSAELFQDTLKFAHDSGAQFNGVLCGRATWSGAVKVYIEEGEQAAREWLRTVGFKNIDDLNTVLKTTATSWKNK</sequence>
<protein>
    <recommendedName>
        <fullName evidence="1">Tagatose 1,6-diphosphate aldolase</fullName>
        <ecNumber evidence="1">4.1.2.40</ecNumber>
    </recommendedName>
    <alternativeName>
        <fullName evidence="1">D-tagatose-1,6-bisphosphate aldolase</fullName>
    </alternativeName>
    <alternativeName>
        <fullName evidence="1">Tagatose-bisphosphate aldolase</fullName>
    </alternativeName>
</protein>